<sequence length="228" mass="26047">MPKYYCEYCDIYLTHSSPVGRRQHVQGRKHISAKIEYFQNLLREEGITPQNFLGFLGPRALNNILGNPMMNNMMPGNFPMHMKHNNMKHHSHYSRRSHRHHMPHGRYGRERHGHYSYSSKYHSHPMHMNSSSMSSMSGFPYNEHSGNFFSLSNSMHGNGKMGNMVIRDLVSNVNIENDLVKDNPNEERNGDSAIANQPSTMHHEEDQDDPANATGGTANNNDNVSINA</sequence>
<reference key="1">
    <citation type="journal article" date="2008" name="Nature">
        <title>The genome of the simian and human malaria parasite Plasmodium knowlesi.</title>
        <authorList>
            <person name="Pain A."/>
            <person name="Boehme U."/>
            <person name="Berry A.E."/>
            <person name="Mungall K."/>
            <person name="Finn R.D."/>
            <person name="Jackson A.P."/>
            <person name="Mourier T."/>
            <person name="Mistry J."/>
            <person name="Pasini E.M."/>
            <person name="Aslett M.A."/>
            <person name="Balasubrammaniam S."/>
            <person name="Borgwardt K."/>
            <person name="Brooks K."/>
            <person name="Carret C."/>
            <person name="Carver T.J."/>
            <person name="Cherevach I."/>
            <person name="Chillingworth T."/>
            <person name="Clark T.G."/>
            <person name="Galinski M.R."/>
            <person name="Hall N."/>
            <person name="Harper D."/>
            <person name="Harris D."/>
            <person name="Hauser H."/>
            <person name="Ivens A."/>
            <person name="Janssen C.S."/>
            <person name="Keane T."/>
            <person name="Larke N."/>
            <person name="Lapp S."/>
            <person name="Marti M."/>
            <person name="Moule S."/>
            <person name="Meyer I.M."/>
            <person name="Ormond D."/>
            <person name="Peters N."/>
            <person name="Sanders M."/>
            <person name="Sanders S."/>
            <person name="Sargeant T.J."/>
            <person name="Simmonds M."/>
            <person name="Smith F."/>
            <person name="Squares R."/>
            <person name="Thurston S."/>
            <person name="Tivey A.R."/>
            <person name="Walker D."/>
            <person name="White B."/>
            <person name="Zuiderwijk E."/>
            <person name="Churcher C."/>
            <person name="Quail M.A."/>
            <person name="Cowman A.F."/>
            <person name="Turner C.M.R."/>
            <person name="Rajandream M.A."/>
            <person name="Kocken C.H.M."/>
            <person name="Thomas A.W."/>
            <person name="Newbold C.I."/>
            <person name="Barrell B.G."/>
            <person name="Berriman M."/>
        </authorList>
    </citation>
    <scope>NUCLEOTIDE SEQUENCE [LARGE SCALE GENOMIC DNA]</scope>
    <source>
        <strain>H</strain>
    </source>
</reference>
<feature type="chain" id="PRO_0000414276" description="U1 small nuclear ribonucleoprotein C">
    <location>
        <begin position="1"/>
        <end position="228"/>
    </location>
</feature>
<feature type="zinc finger region" description="Matrin-type" evidence="1">
    <location>
        <begin position="4"/>
        <end position="36"/>
    </location>
</feature>
<feature type="region of interest" description="Disordered" evidence="2">
    <location>
        <begin position="179"/>
        <end position="228"/>
    </location>
</feature>
<feature type="compositionally biased region" description="Basic and acidic residues" evidence="2">
    <location>
        <begin position="179"/>
        <end position="190"/>
    </location>
</feature>
<feature type="compositionally biased region" description="Low complexity" evidence="2">
    <location>
        <begin position="211"/>
        <end position="221"/>
    </location>
</feature>
<dbReference type="EMBL" id="AM910996">
    <property type="protein sequence ID" value="CAQ42041.1"/>
    <property type="molecule type" value="Genomic_DNA"/>
</dbReference>
<dbReference type="RefSeq" id="XP_002262163.1">
    <property type="nucleotide sequence ID" value="XM_002262127.1"/>
</dbReference>
<dbReference type="SMR" id="B3LC82"/>
<dbReference type="FunCoup" id="B3LC82">
    <property type="interactions" value="82"/>
</dbReference>
<dbReference type="STRING" id="5851.B3LC82"/>
<dbReference type="EnsemblProtists" id="CAQ42041">
    <property type="protein sequence ID" value="CAQ42041"/>
    <property type="gene ID" value="PKH_142590"/>
</dbReference>
<dbReference type="GeneID" id="7323057"/>
<dbReference type="KEGG" id="pkn:PKNH_1427900"/>
<dbReference type="VEuPathDB" id="PlasmoDB:PKNH_1427900"/>
<dbReference type="HOGENOM" id="CLU_106083_0_0_1"/>
<dbReference type="InParanoid" id="B3LC82"/>
<dbReference type="OMA" id="MHGNGKM"/>
<dbReference type="OrthoDB" id="76567at2759"/>
<dbReference type="PhylomeDB" id="B3LC82"/>
<dbReference type="Proteomes" id="UP000031513">
    <property type="component" value="Chromosome 14"/>
</dbReference>
<dbReference type="GO" id="GO:0000243">
    <property type="term" value="C:commitment complex"/>
    <property type="evidence" value="ECO:0007669"/>
    <property type="project" value="UniProtKB-UniRule"/>
</dbReference>
<dbReference type="GO" id="GO:0005685">
    <property type="term" value="C:U1 snRNP"/>
    <property type="evidence" value="ECO:0007669"/>
    <property type="project" value="UniProtKB-UniRule"/>
</dbReference>
<dbReference type="GO" id="GO:0071004">
    <property type="term" value="C:U2-type prespliceosome"/>
    <property type="evidence" value="ECO:0007669"/>
    <property type="project" value="UniProtKB-UniRule"/>
</dbReference>
<dbReference type="GO" id="GO:0003729">
    <property type="term" value="F:mRNA binding"/>
    <property type="evidence" value="ECO:0007669"/>
    <property type="project" value="UniProtKB-UniRule"/>
</dbReference>
<dbReference type="GO" id="GO:0030627">
    <property type="term" value="F:pre-mRNA 5'-splice site binding"/>
    <property type="evidence" value="ECO:0007669"/>
    <property type="project" value="InterPro"/>
</dbReference>
<dbReference type="GO" id="GO:0030619">
    <property type="term" value="F:U1 snRNA binding"/>
    <property type="evidence" value="ECO:0007669"/>
    <property type="project" value="UniProtKB-UniRule"/>
</dbReference>
<dbReference type="GO" id="GO:0008270">
    <property type="term" value="F:zinc ion binding"/>
    <property type="evidence" value="ECO:0007669"/>
    <property type="project" value="UniProtKB-UniRule"/>
</dbReference>
<dbReference type="GO" id="GO:0000395">
    <property type="term" value="P:mRNA 5'-splice site recognition"/>
    <property type="evidence" value="ECO:0007669"/>
    <property type="project" value="UniProtKB-UniRule"/>
</dbReference>
<dbReference type="GO" id="GO:0000387">
    <property type="term" value="P:spliceosomal snRNP assembly"/>
    <property type="evidence" value="ECO:0007669"/>
    <property type="project" value="UniProtKB-UniRule"/>
</dbReference>
<dbReference type="FunFam" id="3.30.160.60:FF:000890">
    <property type="entry name" value="U1 small nuclear ribonucleoprotein C"/>
    <property type="match status" value="1"/>
</dbReference>
<dbReference type="Gene3D" id="3.30.160.60">
    <property type="entry name" value="Classic Zinc Finger"/>
    <property type="match status" value="1"/>
</dbReference>
<dbReference type="HAMAP" id="MF_03153">
    <property type="entry name" value="U1_C"/>
    <property type="match status" value="1"/>
</dbReference>
<dbReference type="InterPro" id="IPR000690">
    <property type="entry name" value="Matrin/U1-C_Znf_C2H2"/>
</dbReference>
<dbReference type="InterPro" id="IPR003604">
    <property type="entry name" value="Matrin/U1-like-C_Znf_C2H2"/>
</dbReference>
<dbReference type="InterPro" id="IPR013085">
    <property type="entry name" value="U1-CZ_Znf_C2H2"/>
</dbReference>
<dbReference type="InterPro" id="IPR017340">
    <property type="entry name" value="U1_snRNP-C"/>
</dbReference>
<dbReference type="InterPro" id="IPR036236">
    <property type="entry name" value="Znf_C2H2_sf"/>
</dbReference>
<dbReference type="PANTHER" id="PTHR31148">
    <property type="entry name" value="U1 SMALL NUCLEAR RIBONUCLEOPROTEIN C"/>
    <property type="match status" value="1"/>
</dbReference>
<dbReference type="PANTHER" id="PTHR31148:SF1">
    <property type="entry name" value="U1 SMALL NUCLEAR RIBONUCLEOPROTEIN C"/>
    <property type="match status" value="1"/>
</dbReference>
<dbReference type="Pfam" id="PF06220">
    <property type="entry name" value="zf-U1"/>
    <property type="match status" value="1"/>
</dbReference>
<dbReference type="PIRSF" id="PIRSF037969">
    <property type="entry name" value="U1_snRNP-C"/>
    <property type="match status" value="1"/>
</dbReference>
<dbReference type="SMART" id="SM00451">
    <property type="entry name" value="ZnF_U1"/>
    <property type="match status" value="1"/>
</dbReference>
<dbReference type="SUPFAM" id="SSF57667">
    <property type="entry name" value="beta-beta-alpha zinc fingers"/>
    <property type="match status" value="1"/>
</dbReference>
<dbReference type="PROSITE" id="PS50171">
    <property type="entry name" value="ZF_MATRIN"/>
    <property type="match status" value="1"/>
</dbReference>
<gene>
    <name type="ORF">PKH_142590</name>
</gene>
<evidence type="ECO:0000255" key="1">
    <source>
        <dbReference type="HAMAP-Rule" id="MF_03153"/>
    </source>
</evidence>
<evidence type="ECO:0000256" key="2">
    <source>
        <dbReference type="SAM" id="MobiDB-lite"/>
    </source>
</evidence>
<organism>
    <name type="scientific">Plasmodium knowlesi (strain H)</name>
    <dbReference type="NCBI Taxonomy" id="5851"/>
    <lineage>
        <taxon>Eukaryota</taxon>
        <taxon>Sar</taxon>
        <taxon>Alveolata</taxon>
        <taxon>Apicomplexa</taxon>
        <taxon>Aconoidasida</taxon>
        <taxon>Haemosporida</taxon>
        <taxon>Plasmodiidae</taxon>
        <taxon>Plasmodium</taxon>
        <taxon>Plasmodium (Plasmodium)</taxon>
    </lineage>
</organism>
<name>RU1C_PLAKH</name>
<protein>
    <recommendedName>
        <fullName evidence="1">U1 small nuclear ribonucleoprotein C</fullName>
        <shortName evidence="1">U1 snRNP C</shortName>
        <shortName evidence="1">U1-C</shortName>
        <shortName evidence="1">U1C</shortName>
    </recommendedName>
</protein>
<comment type="function">
    <text evidence="1">Component of the spliceosomal U1 snRNP, which is essential for recognition of the pre-mRNA 5' splice-site and the subsequent assembly of the spliceosome. U1-C is directly involved in initial 5' splice-site recognition for both constitutive and regulated alternative splicing. The interaction with the 5' splice-site seems to precede base-pairing between the pre-mRNA and the U1 snRNA. Stimulates commitment or early (E) complex formation by stabilizing the base pairing of the 5' end of the U1 snRNA and the 5' splice-site region.</text>
</comment>
<comment type="subunit">
    <text evidence="1">U1 snRNP is composed of the 7 core Sm proteins B/B', D1, D2, D3, E, F and G that assemble in a heptameric protein ring on the Sm site of the small nuclear RNA to form the core snRNP, and at least 3 U1 snRNP-specific proteins U1-70K, U1-A and U1-C. U1-C interacts with U1 snRNA and the 5' splice-site region of the pre-mRNA.</text>
</comment>
<comment type="subcellular location">
    <subcellularLocation>
        <location evidence="1">Nucleus</location>
    </subcellularLocation>
</comment>
<comment type="similarity">
    <text evidence="1">Belongs to the U1 small nuclear ribonucleoprotein C family.</text>
</comment>
<keyword id="KW-0479">Metal-binding</keyword>
<keyword id="KW-0539">Nucleus</keyword>
<keyword id="KW-1185">Reference proteome</keyword>
<keyword id="KW-0687">Ribonucleoprotein</keyword>
<keyword id="KW-0694">RNA-binding</keyword>
<keyword id="KW-0862">Zinc</keyword>
<keyword id="KW-0863">Zinc-finger</keyword>
<proteinExistence type="inferred from homology"/>
<accession>B3LC82</accession>